<comment type="function">
    <text evidence="1">Component of the eukaryotic translation initiation factor 3 (eIF-3) complex, which is involved in protein synthesis of a specialized repertoire of mRNAs and, together with other initiation factors, stimulates binding of mRNA and methionyl-tRNAi to the 40S ribosome. The eIF-3 complex specifically targets and initiates translation of a subset of mRNAs involved in cell proliferation.</text>
</comment>
<comment type="subunit">
    <text evidence="1">Component of the eukaryotic translation initiation factor 3 (eIF-3) complex.</text>
</comment>
<comment type="subcellular location">
    <subcellularLocation>
        <location evidence="1">Cytoplasm</location>
    </subcellularLocation>
</comment>
<comment type="similarity">
    <text evidence="1">Belongs to the eIF-3 subunit H family.</text>
</comment>
<accession>A4QT78</accession>
<accession>G4N4R8</accession>
<keyword id="KW-0963">Cytoplasm</keyword>
<keyword id="KW-0396">Initiation factor</keyword>
<keyword id="KW-0648">Protein biosynthesis</keyword>
<keyword id="KW-1185">Reference proteome</keyword>
<proteinExistence type="inferred from homology"/>
<protein>
    <recommendedName>
        <fullName evidence="1">Eukaryotic translation initiation factor 3 subunit H</fullName>
        <shortName evidence="1">eIF3h</shortName>
    </recommendedName>
</protein>
<sequence length="363" mass="40478">MADTFKESPIKSVQVEALVVMKIAKHCSSSFPTIATGSIVGMDNDTLVEVTNSLNFPTVDVANVDSHQSERDASAQAAAAPRSKANLMYQAEMIKHLREVNVDANCVGWYTSATMGNFVTMSFIENQAHYQRENPKAIALVHDVSRSSQASLSLRAFRLSTAFMTALKENKFTTENLQKTKLTYKDILIEMPVVIHNSHLLTTYLHQIPSAPAAGSETTIPTSLAALQREPVNIPPYPSIDSLELSIDPFLEKTCDLLLDSIEAHYTDLNNHQYYQRQMTREQAKITAWQAKRKAENAARAAAKQEPLPDDEWKRLFKLPQEPSRLEGMLNARQVEQYSKQVDGFTANVSAKMFAVRGSLLTE</sequence>
<reference key="1">
    <citation type="journal article" date="2005" name="Nature">
        <title>The genome sequence of the rice blast fungus Magnaporthe grisea.</title>
        <authorList>
            <person name="Dean R.A."/>
            <person name="Talbot N.J."/>
            <person name="Ebbole D.J."/>
            <person name="Farman M.L."/>
            <person name="Mitchell T.K."/>
            <person name="Orbach M.J."/>
            <person name="Thon M.R."/>
            <person name="Kulkarni R."/>
            <person name="Xu J.-R."/>
            <person name="Pan H."/>
            <person name="Read N.D."/>
            <person name="Lee Y.-H."/>
            <person name="Carbone I."/>
            <person name="Brown D."/>
            <person name="Oh Y.Y."/>
            <person name="Donofrio N."/>
            <person name="Jeong J.S."/>
            <person name="Soanes D.M."/>
            <person name="Djonovic S."/>
            <person name="Kolomiets E."/>
            <person name="Rehmeyer C."/>
            <person name="Li W."/>
            <person name="Harding M."/>
            <person name="Kim S."/>
            <person name="Lebrun M.-H."/>
            <person name="Bohnert H."/>
            <person name="Coughlan S."/>
            <person name="Butler J."/>
            <person name="Calvo S.E."/>
            <person name="Ma L.-J."/>
            <person name="Nicol R."/>
            <person name="Purcell S."/>
            <person name="Nusbaum C."/>
            <person name="Galagan J.E."/>
            <person name="Birren B.W."/>
        </authorList>
    </citation>
    <scope>NUCLEOTIDE SEQUENCE [LARGE SCALE GENOMIC DNA]</scope>
    <source>
        <strain>70-15 / ATCC MYA-4617 / FGSC 8958</strain>
    </source>
</reference>
<evidence type="ECO:0000255" key="1">
    <source>
        <dbReference type="HAMAP-Rule" id="MF_03007"/>
    </source>
</evidence>
<evidence type="ECO:0000255" key="2">
    <source>
        <dbReference type="PROSITE-ProRule" id="PRU01182"/>
    </source>
</evidence>
<gene>
    <name type="ORF">MGG_05156</name>
</gene>
<organism>
    <name type="scientific">Pyricularia oryzae (strain 70-15 / ATCC MYA-4617 / FGSC 8958)</name>
    <name type="common">Rice blast fungus</name>
    <name type="synonym">Magnaporthe oryzae</name>
    <dbReference type="NCBI Taxonomy" id="242507"/>
    <lineage>
        <taxon>Eukaryota</taxon>
        <taxon>Fungi</taxon>
        <taxon>Dikarya</taxon>
        <taxon>Ascomycota</taxon>
        <taxon>Pezizomycotina</taxon>
        <taxon>Sordariomycetes</taxon>
        <taxon>Sordariomycetidae</taxon>
        <taxon>Magnaporthales</taxon>
        <taxon>Pyriculariaceae</taxon>
        <taxon>Pyricularia</taxon>
    </lineage>
</organism>
<name>EIF3H_PYRO7</name>
<feature type="chain" id="PRO_0000365208" description="Eukaryotic translation initiation factor 3 subunit H">
    <location>
        <begin position="1"/>
        <end position="363"/>
    </location>
</feature>
<feature type="domain" description="MPN" evidence="2">
    <location>
        <begin position="13"/>
        <end position="163"/>
    </location>
</feature>
<dbReference type="EMBL" id="CM001233">
    <property type="protein sequence ID" value="EHA52883.1"/>
    <property type="molecule type" value="Genomic_DNA"/>
</dbReference>
<dbReference type="RefSeq" id="XP_003712690.1">
    <property type="nucleotide sequence ID" value="XM_003712642.1"/>
</dbReference>
<dbReference type="SMR" id="A4QT78"/>
<dbReference type="STRING" id="242507.A4QT78"/>
<dbReference type="EnsemblFungi" id="MGG_05156T0">
    <property type="protein sequence ID" value="MGG_05156T0"/>
    <property type="gene ID" value="MGG_05156"/>
</dbReference>
<dbReference type="GeneID" id="2675614"/>
<dbReference type="KEGG" id="mgr:MGG_05156"/>
<dbReference type="VEuPathDB" id="FungiDB:MGG_05156"/>
<dbReference type="eggNOG" id="KOG1560">
    <property type="taxonomic scope" value="Eukaryota"/>
</dbReference>
<dbReference type="HOGENOM" id="CLU_044094_1_0_1"/>
<dbReference type="InParanoid" id="A4QT78"/>
<dbReference type="OMA" id="WYQSTYF"/>
<dbReference type="OrthoDB" id="10265695at2759"/>
<dbReference type="Proteomes" id="UP000009058">
    <property type="component" value="Chromosome 3"/>
</dbReference>
<dbReference type="GO" id="GO:0016282">
    <property type="term" value="C:eukaryotic 43S preinitiation complex"/>
    <property type="evidence" value="ECO:0007669"/>
    <property type="project" value="UniProtKB-UniRule"/>
</dbReference>
<dbReference type="GO" id="GO:0033290">
    <property type="term" value="C:eukaryotic 48S preinitiation complex"/>
    <property type="evidence" value="ECO:0007669"/>
    <property type="project" value="UniProtKB-UniRule"/>
</dbReference>
<dbReference type="GO" id="GO:0005852">
    <property type="term" value="C:eukaryotic translation initiation factor 3 complex"/>
    <property type="evidence" value="ECO:0007669"/>
    <property type="project" value="UniProtKB-UniRule"/>
</dbReference>
<dbReference type="GO" id="GO:0008237">
    <property type="term" value="F:metallopeptidase activity"/>
    <property type="evidence" value="ECO:0007669"/>
    <property type="project" value="InterPro"/>
</dbReference>
<dbReference type="GO" id="GO:0003743">
    <property type="term" value="F:translation initiation factor activity"/>
    <property type="evidence" value="ECO:0007669"/>
    <property type="project" value="UniProtKB-UniRule"/>
</dbReference>
<dbReference type="GO" id="GO:0001732">
    <property type="term" value="P:formation of cytoplasmic translation initiation complex"/>
    <property type="evidence" value="ECO:0007669"/>
    <property type="project" value="UniProtKB-UniRule"/>
</dbReference>
<dbReference type="CDD" id="cd08065">
    <property type="entry name" value="MPN_eIF3h"/>
    <property type="match status" value="1"/>
</dbReference>
<dbReference type="FunFam" id="3.40.140.10:FF:000052">
    <property type="entry name" value="Eukaryotic translation initiation factor 3 subunit H"/>
    <property type="match status" value="1"/>
</dbReference>
<dbReference type="Gene3D" id="3.40.140.10">
    <property type="entry name" value="Cytidine Deaminase, domain 2"/>
    <property type="match status" value="1"/>
</dbReference>
<dbReference type="HAMAP" id="MF_03007">
    <property type="entry name" value="eIF3h"/>
    <property type="match status" value="1"/>
</dbReference>
<dbReference type="InterPro" id="IPR027524">
    <property type="entry name" value="eIF3h"/>
</dbReference>
<dbReference type="InterPro" id="IPR045810">
    <property type="entry name" value="eIF3h_C"/>
</dbReference>
<dbReference type="InterPro" id="IPR000555">
    <property type="entry name" value="JAMM/MPN+_dom"/>
</dbReference>
<dbReference type="InterPro" id="IPR050242">
    <property type="entry name" value="JAMM_MPN+_peptidase_M67A"/>
</dbReference>
<dbReference type="InterPro" id="IPR037518">
    <property type="entry name" value="MPN"/>
</dbReference>
<dbReference type="PANTHER" id="PTHR10410">
    <property type="entry name" value="EUKARYOTIC TRANSLATION INITIATION FACTOR 3 -RELATED"/>
    <property type="match status" value="1"/>
</dbReference>
<dbReference type="Pfam" id="PF19445">
    <property type="entry name" value="eIF3h_C"/>
    <property type="match status" value="2"/>
</dbReference>
<dbReference type="Pfam" id="PF01398">
    <property type="entry name" value="JAB"/>
    <property type="match status" value="1"/>
</dbReference>
<dbReference type="SMART" id="SM00232">
    <property type="entry name" value="JAB_MPN"/>
    <property type="match status" value="1"/>
</dbReference>
<dbReference type="PROSITE" id="PS50249">
    <property type="entry name" value="MPN"/>
    <property type="match status" value="1"/>
</dbReference>